<accession>Q914G1</accession>
<keyword id="KW-1185">Reference proteome</keyword>
<organismHost>
    <name type="scientific">Saccharolobus islandicus</name>
    <name type="common">Sulfolobus islandicus</name>
    <dbReference type="NCBI Taxonomy" id="43080"/>
</organismHost>
<feature type="chain" id="PRO_0000385406" description="Uncharacterized protein 71">
    <location>
        <begin position="1"/>
        <end position="73"/>
    </location>
</feature>
<dbReference type="EMBL" id="AF440571">
    <property type="protein sequence ID" value="AAL27780.1"/>
    <property type="molecule type" value="Genomic_DNA"/>
</dbReference>
<dbReference type="RefSeq" id="NP_445734.1">
    <property type="nucleotide sequence ID" value="NC_003214.2"/>
</dbReference>
<dbReference type="GeneID" id="922328"/>
<dbReference type="KEGG" id="vg:922328"/>
<dbReference type="Proteomes" id="UP000007017">
    <property type="component" value="Segment"/>
</dbReference>
<protein>
    <recommendedName>
        <fullName>Uncharacterized protein 71</fullName>
    </recommendedName>
</protein>
<sequence length="73" mass="8529">MVYPFFYIMHGLTFLKENGRQFKVLILPSKVFSKAYLETLMEDFKSLGYSVSVEERDGRYVLKVTDKIVILGE</sequence>
<reference key="1">
    <citation type="journal article" date="2000" name="Virology">
        <title>A novel lipothrixvirus, SIFV, of the extremely thermophilic crenarchaeon Sulfolobus.</title>
        <authorList>
            <person name="Arnold H.P."/>
            <person name="Zillig W."/>
            <person name="Ziese U."/>
            <person name="Holz I."/>
            <person name="Crosby M."/>
            <person name="Utterback T."/>
            <person name="Weidmann J.F."/>
            <person name="Umayam L.A."/>
            <person name="Teffera K."/>
            <person name="Kristjanson J.K."/>
            <person name="Klenk H.P."/>
            <person name="Nelson K.E."/>
            <person name="Fraser C.M."/>
        </authorList>
    </citation>
    <scope>NUCLEOTIDE SEQUENCE [GENOMIC DNA]</scope>
</reference>
<organism>
    <name type="scientific">Sulfolobus islandicus filamentous virus (isolate Iceland/Hveragerdi)</name>
    <name type="common">SIFV</name>
    <dbReference type="NCBI Taxonomy" id="654908"/>
    <lineage>
        <taxon>Viruses</taxon>
        <taxon>Adnaviria</taxon>
        <taxon>Zilligvirae</taxon>
        <taxon>Taleaviricota</taxon>
        <taxon>Tokiviricetes</taxon>
        <taxon>Ligamenvirales</taxon>
        <taxon>Lipothrixviridae</taxon>
        <taxon>Betalipothrixvirus</taxon>
        <taxon>Sulfolobus islandicus filamentous virus</taxon>
    </lineage>
</organism>
<gene>
    <name type="primary">SIFV0071</name>
</gene>
<proteinExistence type="predicted"/>
<name>Y071_SIFVH</name>